<name>RL3_MAGMM</name>
<comment type="function">
    <text evidence="1">One of the primary rRNA binding proteins, it binds directly near the 3'-end of the 23S rRNA, where it nucleates assembly of the 50S subunit.</text>
</comment>
<comment type="subunit">
    <text evidence="1">Part of the 50S ribosomal subunit. Forms a cluster with proteins L14 and L19.</text>
</comment>
<comment type="PTM">
    <text evidence="1">Methylated by PrmB.</text>
</comment>
<comment type="similarity">
    <text evidence="1">Belongs to the universal ribosomal protein uL3 family.</text>
</comment>
<proteinExistence type="inferred from homology"/>
<gene>
    <name evidence="1" type="primary">rplC</name>
    <name type="ordered locus">Mmc1_0847</name>
</gene>
<accession>A0L5X3</accession>
<keyword id="KW-0488">Methylation</keyword>
<keyword id="KW-1185">Reference proteome</keyword>
<keyword id="KW-0687">Ribonucleoprotein</keyword>
<keyword id="KW-0689">Ribosomal protein</keyword>
<keyword id="KW-0694">RNA-binding</keyword>
<keyword id="KW-0699">rRNA-binding</keyword>
<dbReference type="EMBL" id="CP000471">
    <property type="protein sequence ID" value="ABK43366.1"/>
    <property type="molecule type" value="Genomic_DNA"/>
</dbReference>
<dbReference type="RefSeq" id="WP_011712525.1">
    <property type="nucleotide sequence ID" value="NC_008576.1"/>
</dbReference>
<dbReference type="SMR" id="A0L5X3"/>
<dbReference type="STRING" id="156889.Mmc1_0847"/>
<dbReference type="KEGG" id="mgm:Mmc1_0847"/>
<dbReference type="eggNOG" id="COG0087">
    <property type="taxonomic scope" value="Bacteria"/>
</dbReference>
<dbReference type="HOGENOM" id="CLU_044142_4_1_5"/>
<dbReference type="OrthoDB" id="9806135at2"/>
<dbReference type="Proteomes" id="UP000002586">
    <property type="component" value="Chromosome"/>
</dbReference>
<dbReference type="GO" id="GO:0022625">
    <property type="term" value="C:cytosolic large ribosomal subunit"/>
    <property type="evidence" value="ECO:0007669"/>
    <property type="project" value="TreeGrafter"/>
</dbReference>
<dbReference type="GO" id="GO:0019843">
    <property type="term" value="F:rRNA binding"/>
    <property type="evidence" value="ECO:0007669"/>
    <property type="project" value="UniProtKB-UniRule"/>
</dbReference>
<dbReference type="GO" id="GO:0003735">
    <property type="term" value="F:structural constituent of ribosome"/>
    <property type="evidence" value="ECO:0007669"/>
    <property type="project" value="InterPro"/>
</dbReference>
<dbReference type="GO" id="GO:0006412">
    <property type="term" value="P:translation"/>
    <property type="evidence" value="ECO:0007669"/>
    <property type="project" value="UniProtKB-UniRule"/>
</dbReference>
<dbReference type="FunFam" id="2.40.30.10:FF:000004">
    <property type="entry name" value="50S ribosomal protein L3"/>
    <property type="match status" value="1"/>
</dbReference>
<dbReference type="FunFam" id="3.30.160.810:FF:000001">
    <property type="entry name" value="50S ribosomal protein L3"/>
    <property type="match status" value="1"/>
</dbReference>
<dbReference type="Gene3D" id="3.30.160.810">
    <property type="match status" value="1"/>
</dbReference>
<dbReference type="Gene3D" id="2.40.30.10">
    <property type="entry name" value="Translation factors"/>
    <property type="match status" value="1"/>
</dbReference>
<dbReference type="HAMAP" id="MF_01325_B">
    <property type="entry name" value="Ribosomal_uL3_B"/>
    <property type="match status" value="1"/>
</dbReference>
<dbReference type="InterPro" id="IPR000597">
    <property type="entry name" value="Ribosomal_uL3"/>
</dbReference>
<dbReference type="InterPro" id="IPR019927">
    <property type="entry name" value="Ribosomal_uL3_bac/org-type"/>
</dbReference>
<dbReference type="InterPro" id="IPR019926">
    <property type="entry name" value="Ribosomal_uL3_CS"/>
</dbReference>
<dbReference type="InterPro" id="IPR009000">
    <property type="entry name" value="Transl_B-barrel_sf"/>
</dbReference>
<dbReference type="NCBIfam" id="TIGR03625">
    <property type="entry name" value="L3_bact"/>
    <property type="match status" value="1"/>
</dbReference>
<dbReference type="PANTHER" id="PTHR11229">
    <property type="entry name" value="50S RIBOSOMAL PROTEIN L3"/>
    <property type="match status" value="1"/>
</dbReference>
<dbReference type="PANTHER" id="PTHR11229:SF16">
    <property type="entry name" value="LARGE RIBOSOMAL SUBUNIT PROTEIN UL3C"/>
    <property type="match status" value="1"/>
</dbReference>
<dbReference type="Pfam" id="PF00297">
    <property type="entry name" value="Ribosomal_L3"/>
    <property type="match status" value="1"/>
</dbReference>
<dbReference type="SUPFAM" id="SSF50447">
    <property type="entry name" value="Translation proteins"/>
    <property type="match status" value="1"/>
</dbReference>
<dbReference type="PROSITE" id="PS00474">
    <property type="entry name" value="RIBOSOMAL_L3"/>
    <property type="match status" value="1"/>
</dbReference>
<organism>
    <name type="scientific">Magnetococcus marinus (strain ATCC BAA-1437 / JCM 17883 / MC-1)</name>
    <dbReference type="NCBI Taxonomy" id="156889"/>
    <lineage>
        <taxon>Bacteria</taxon>
        <taxon>Pseudomonadati</taxon>
        <taxon>Pseudomonadota</taxon>
        <taxon>Alphaproteobacteria</taxon>
        <taxon>Magnetococcales</taxon>
        <taxon>Magnetococcaceae</taxon>
        <taxon>Magnetococcus</taxon>
    </lineage>
</organism>
<reference key="1">
    <citation type="journal article" date="2009" name="Appl. Environ. Microbiol.">
        <title>Complete genome sequence of the chemolithoautotrophic marine magnetotactic coccus strain MC-1.</title>
        <authorList>
            <person name="Schubbe S."/>
            <person name="Williams T.J."/>
            <person name="Xie G."/>
            <person name="Kiss H.E."/>
            <person name="Brettin T.S."/>
            <person name="Martinez D."/>
            <person name="Ross C.A."/>
            <person name="Schuler D."/>
            <person name="Cox B.L."/>
            <person name="Nealson K.H."/>
            <person name="Bazylinski D.A."/>
        </authorList>
    </citation>
    <scope>NUCLEOTIDE SEQUENCE [LARGE SCALE GENOMIC DNA]</scope>
    <source>
        <strain>ATCC BAA-1437 / JCM 17883 / MC-1</strain>
    </source>
</reference>
<sequence length="214" mass="23137">MRSGLIGRKLGMSQMFTEDGQRIPVTLVQLGPCAVVAKRSDEQDGYNAVQLGFEEAKPSRLSKTVRGQYAKANVTPRRVLREFRVSNPESYEVGQELTAEQFAVDSFVDVTGKTVGKGFAGVMKRWGFRGGRASHGAHKVHRSGGSIGQCQTPGRVYKNKKMAGHMGQQTRTVQNLKVAYVDAVQSIIAVKGSIPGSKGSLVLVRDALKKGSAE</sequence>
<evidence type="ECO:0000255" key="1">
    <source>
        <dbReference type="HAMAP-Rule" id="MF_01325"/>
    </source>
</evidence>
<evidence type="ECO:0000305" key="2"/>
<feature type="chain" id="PRO_0000353612" description="Large ribosomal subunit protein uL3">
    <location>
        <begin position="1"/>
        <end position="214"/>
    </location>
</feature>
<feature type="modified residue" description="N5-methylglutamine" evidence="1">
    <location>
        <position position="151"/>
    </location>
</feature>
<protein>
    <recommendedName>
        <fullName evidence="1">Large ribosomal subunit protein uL3</fullName>
    </recommendedName>
    <alternativeName>
        <fullName evidence="2">50S ribosomal protein L3</fullName>
    </alternativeName>
</protein>